<accession>A1A0A3</accession>
<evidence type="ECO:0000255" key="1">
    <source>
        <dbReference type="HAMAP-Rule" id="MF_00003"/>
    </source>
</evidence>
<evidence type="ECO:0000256" key="2">
    <source>
        <dbReference type="SAM" id="MobiDB-lite"/>
    </source>
</evidence>
<protein>
    <recommendedName>
        <fullName evidence="1">Ribosome-binding factor A</fullName>
    </recommendedName>
</protein>
<comment type="function">
    <text evidence="1">One of several proteins that assist in the late maturation steps of the functional core of the 30S ribosomal subunit. Associates with free 30S ribosomal subunits (but not with 30S subunits that are part of 70S ribosomes or polysomes). Required for efficient processing of 16S rRNA. May interact with the 5'-terminal helix region of 16S rRNA.</text>
</comment>
<comment type="subunit">
    <text evidence="1">Monomer. Binds 30S ribosomal subunits, but not 50S ribosomal subunits or 70S ribosomes.</text>
</comment>
<comment type="subcellular location">
    <subcellularLocation>
        <location evidence="1">Cytoplasm</location>
    </subcellularLocation>
</comment>
<comment type="similarity">
    <text evidence="1">Belongs to the RbfA family.</text>
</comment>
<keyword id="KW-0963">Cytoplasm</keyword>
<keyword id="KW-1185">Reference proteome</keyword>
<keyword id="KW-0690">Ribosome biogenesis</keyword>
<reference key="1">
    <citation type="submission" date="2006-12" db="EMBL/GenBank/DDBJ databases">
        <title>Bifidobacterium adolescentis complete genome sequence.</title>
        <authorList>
            <person name="Suzuki T."/>
            <person name="Tsuda Y."/>
            <person name="Kanou N."/>
            <person name="Inoue T."/>
            <person name="Kumazaki K."/>
            <person name="Nagano S."/>
            <person name="Hirai S."/>
            <person name="Tanaka K."/>
            <person name="Watanabe K."/>
        </authorList>
    </citation>
    <scope>NUCLEOTIDE SEQUENCE [LARGE SCALE GENOMIC DNA]</scope>
    <source>
        <strain>ATCC 15703 / DSM 20083 / NCTC 11814 / E194a</strain>
    </source>
</reference>
<dbReference type="EMBL" id="AP009256">
    <property type="protein sequence ID" value="BAF39136.1"/>
    <property type="molecule type" value="Genomic_DNA"/>
</dbReference>
<dbReference type="RefSeq" id="WP_003808161.1">
    <property type="nucleotide sequence ID" value="NZ_CAXVNC010000001.1"/>
</dbReference>
<dbReference type="SMR" id="A1A0A3"/>
<dbReference type="STRING" id="367928.BAD_0355"/>
<dbReference type="PaxDb" id="1680-BADO_0362"/>
<dbReference type="DNASU" id="4556617"/>
<dbReference type="GeneID" id="4556617"/>
<dbReference type="KEGG" id="bad:BAD_0355"/>
<dbReference type="HOGENOM" id="CLU_089475_0_1_11"/>
<dbReference type="Proteomes" id="UP000008702">
    <property type="component" value="Chromosome"/>
</dbReference>
<dbReference type="GO" id="GO:0005829">
    <property type="term" value="C:cytosol"/>
    <property type="evidence" value="ECO:0007669"/>
    <property type="project" value="TreeGrafter"/>
</dbReference>
<dbReference type="GO" id="GO:0043024">
    <property type="term" value="F:ribosomal small subunit binding"/>
    <property type="evidence" value="ECO:0007669"/>
    <property type="project" value="TreeGrafter"/>
</dbReference>
<dbReference type="GO" id="GO:0030490">
    <property type="term" value="P:maturation of SSU-rRNA"/>
    <property type="evidence" value="ECO:0007669"/>
    <property type="project" value="UniProtKB-UniRule"/>
</dbReference>
<dbReference type="Gene3D" id="3.30.300.20">
    <property type="match status" value="1"/>
</dbReference>
<dbReference type="HAMAP" id="MF_00003">
    <property type="entry name" value="RbfA"/>
    <property type="match status" value="1"/>
</dbReference>
<dbReference type="InterPro" id="IPR015946">
    <property type="entry name" value="KH_dom-like_a/b"/>
</dbReference>
<dbReference type="InterPro" id="IPR000238">
    <property type="entry name" value="RbfA"/>
</dbReference>
<dbReference type="InterPro" id="IPR023799">
    <property type="entry name" value="RbfA_dom_sf"/>
</dbReference>
<dbReference type="InterPro" id="IPR020053">
    <property type="entry name" value="Ribosome-bd_factorA_CS"/>
</dbReference>
<dbReference type="NCBIfam" id="TIGR00082">
    <property type="entry name" value="rbfA"/>
    <property type="match status" value="1"/>
</dbReference>
<dbReference type="PANTHER" id="PTHR33515">
    <property type="entry name" value="RIBOSOME-BINDING FACTOR A, CHLOROPLASTIC-RELATED"/>
    <property type="match status" value="1"/>
</dbReference>
<dbReference type="PANTHER" id="PTHR33515:SF1">
    <property type="entry name" value="RIBOSOME-BINDING FACTOR A, CHLOROPLASTIC-RELATED"/>
    <property type="match status" value="1"/>
</dbReference>
<dbReference type="Pfam" id="PF02033">
    <property type="entry name" value="RBFA"/>
    <property type="match status" value="1"/>
</dbReference>
<dbReference type="SUPFAM" id="SSF89919">
    <property type="entry name" value="Ribosome-binding factor A, RbfA"/>
    <property type="match status" value="1"/>
</dbReference>
<dbReference type="PROSITE" id="PS01319">
    <property type="entry name" value="RBFA"/>
    <property type="match status" value="1"/>
</dbReference>
<sequence length="167" mass="18785">MAGTNPRAARIAALIQRVIASSMEAQLHDKRLANVTITEVRVTNDLQIAKVYWTQLGHEGHEQGERRRAQQALNQAKGRLRSLVGTKAGLRLTPQLEFIFDEVPGEAHEIEDILALAHKRDEELAKSRANAQYAGDADPYKHDEPDDDDFDDDDDVEVEDWDDDDEA</sequence>
<proteinExistence type="inferred from homology"/>
<name>RBFA_BIFAA</name>
<gene>
    <name evidence="1" type="primary">rbfA</name>
    <name type="ordered locus">BAD_0355</name>
</gene>
<organism>
    <name type="scientific">Bifidobacterium adolescentis (strain ATCC 15703 / DSM 20083 / NCTC 11814 / E194a)</name>
    <dbReference type="NCBI Taxonomy" id="367928"/>
    <lineage>
        <taxon>Bacteria</taxon>
        <taxon>Bacillati</taxon>
        <taxon>Actinomycetota</taxon>
        <taxon>Actinomycetes</taxon>
        <taxon>Bifidobacteriales</taxon>
        <taxon>Bifidobacteriaceae</taxon>
        <taxon>Bifidobacterium</taxon>
    </lineage>
</organism>
<feature type="chain" id="PRO_0000329324" description="Ribosome-binding factor A">
    <location>
        <begin position="1"/>
        <end position="167"/>
    </location>
</feature>
<feature type="region of interest" description="Disordered" evidence="2">
    <location>
        <begin position="127"/>
        <end position="167"/>
    </location>
</feature>
<feature type="compositionally biased region" description="Acidic residues" evidence="2">
    <location>
        <begin position="145"/>
        <end position="167"/>
    </location>
</feature>